<feature type="chain" id="PRO_0000047366" description="Zinc finger protein 35">
    <location>
        <begin position="1"/>
        <end position="527"/>
    </location>
</feature>
<feature type="zinc finger region" description="C2H2-type 1" evidence="1">
    <location>
        <begin position="222"/>
        <end position="244"/>
    </location>
</feature>
<feature type="zinc finger region" description="C2H2-type 2" evidence="1">
    <location>
        <begin position="250"/>
        <end position="272"/>
    </location>
</feature>
<feature type="zinc finger region" description="C2H2-type 3" evidence="1">
    <location>
        <begin position="278"/>
        <end position="300"/>
    </location>
</feature>
<feature type="zinc finger region" description="C2H2-type 4" evidence="1">
    <location>
        <begin position="306"/>
        <end position="328"/>
    </location>
</feature>
<feature type="zinc finger region" description="C2H2-type 5" evidence="1">
    <location>
        <begin position="334"/>
        <end position="356"/>
    </location>
</feature>
<feature type="zinc finger region" description="C2H2-type 6" evidence="1">
    <location>
        <begin position="362"/>
        <end position="384"/>
    </location>
</feature>
<feature type="zinc finger region" description="C2H2-type 7" evidence="1">
    <location>
        <begin position="390"/>
        <end position="412"/>
    </location>
</feature>
<feature type="zinc finger region" description="C2H2-type 8" evidence="1">
    <location>
        <begin position="418"/>
        <end position="440"/>
    </location>
</feature>
<feature type="zinc finger region" description="C2H2-type 9" evidence="1">
    <location>
        <begin position="446"/>
        <end position="468"/>
    </location>
</feature>
<feature type="zinc finger region" description="C2H2-type 10" evidence="1">
    <location>
        <begin position="474"/>
        <end position="496"/>
    </location>
</feature>
<feature type="zinc finger region" description="C2H2-type 11" evidence="1">
    <location>
        <begin position="502"/>
        <end position="524"/>
    </location>
</feature>
<feature type="region of interest" description="Globular domain">
    <location>
        <begin position="9"/>
        <end position="221"/>
    </location>
</feature>
<feature type="region of interest" description="Disordered" evidence="2">
    <location>
        <begin position="16"/>
        <end position="38"/>
    </location>
</feature>
<feature type="cross-link" description="Glycyl lysine isopeptide (Lys-Gly) (interchain with G-Cter in SUMO2)" evidence="4">
    <location>
        <position position="20"/>
    </location>
</feature>
<feature type="cross-link" description="Glycyl lysine isopeptide (Lys-Gly) (interchain with G-Cter in SUMO2)" evidence="4">
    <location>
        <position position="21"/>
    </location>
</feature>
<feature type="cross-link" description="Glycyl lysine isopeptide (Lys-Gly) (interchain with G-Cter in SUMO2)" evidence="4">
    <location>
        <position position="99"/>
    </location>
</feature>
<feature type="cross-link" description="Glycyl lysine isopeptide (Lys-Gly) (interchain with G-Cter in SUMO2)" evidence="4">
    <location>
        <position position="117"/>
    </location>
</feature>
<feature type="cross-link" description="Glycyl lysine isopeptide (Lys-Gly) (interchain with G-Cter in SUMO2)" evidence="4">
    <location>
        <position position="125"/>
    </location>
</feature>
<feature type="cross-link" description="Glycyl lysine isopeptide (Lys-Gly) (interchain with G-Cter in SUMO2)" evidence="4">
    <location>
        <position position="144"/>
    </location>
</feature>
<feature type="cross-link" description="Glycyl lysine isopeptide (Lys-Gly) (interchain with G-Cter in SUMO2)" evidence="4">
    <location>
        <position position="158"/>
    </location>
</feature>
<feature type="cross-link" description="Glycyl lysine isopeptide (Lys-Gly) (interchain with G-Cter in SUMO2)" evidence="4">
    <location>
        <position position="189"/>
    </location>
</feature>
<feature type="cross-link" description="Glycyl lysine isopeptide (Lys-Gly) (interchain with G-Cter in SUMO2)" evidence="4">
    <location>
        <position position="214"/>
    </location>
</feature>
<feature type="cross-link" description="Glycyl lysine isopeptide (Lys-Gly) (interchain with G-Cter in SUMO2)" evidence="4">
    <location>
        <position position="276"/>
    </location>
</feature>
<feature type="sequence conflict" description="In Ref. 1; CAA30268." evidence="3" ref="1">
    <location>
        <begin position="413"/>
        <end position="440"/>
    </location>
</feature>
<feature type="sequence conflict" description="In Ref. 2; AAA85451." evidence="3" ref="2">
    <original>C</original>
    <variation>S</variation>
    <location>
        <position position="432"/>
    </location>
</feature>
<proteinExistence type="evidence at protein level"/>
<keyword id="KW-0238">DNA-binding</keyword>
<keyword id="KW-1017">Isopeptide bond</keyword>
<keyword id="KW-0479">Metal-binding</keyword>
<keyword id="KW-0539">Nucleus</keyword>
<keyword id="KW-1267">Proteomics identification</keyword>
<keyword id="KW-1185">Reference proteome</keyword>
<keyword id="KW-0677">Repeat</keyword>
<keyword id="KW-0804">Transcription</keyword>
<keyword id="KW-0805">Transcription regulation</keyword>
<keyword id="KW-0832">Ubl conjugation</keyword>
<keyword id="KW-0862">Zinc</keyword>
<keyword id="KW-0863">Zinc-finger</keyword>
<dbReference type="EMBL" id="X07289">
    <property type="protein sequence ID" value="CAA30268.1"/>
    <property type="status" value="ALT_INIT"/>
    <property type="molecule type" value="mRNA"/>
</dbReference>
<dbReference type="EMBL" id="L35269">
    <property type="protein sequence ID" value="AAA85451.1"/>
    <property type="status" value="ALT_INIT"/>
    <property type="molecule type" value="Genomic_DNA"/>
</dbReference>
<dbReference type="EMBL" id="M76702">
    <property type="protein sequence ID" value="AAA85451.1"/>
    <property type="status" value="JOINED"/>
    <property type="molecule type" value="Genomic_DNA"/>
</dbReference>
<dbReference type="EMBL" id="M76703">
    <property type="protein sequence ID" value="AAA85451.1"/>
    <property type="status" value="JOINED"/>
    <property type="molecule type" value="Genomic_DNA"/>
</dbReference>
<dbReference type="EMBL" id="AK314821">
    <property type="protein sequence ID" value="BAG37343.1"/>
    <property type="status" value="ALT_INIT"/>
    <property type="molecule type" value="mRNA"/>
</dbReference>
<dbReference type="EMBL" id="AC099669">
    <property type="status" value="NOT_ANNOTATED_CDS"/>
    <property type="molecule type" value="Genomic_DNA"/>
</dbReference>
<dbReference type="EMBL" id="BC013597">
    <property type="protein sequence ID" value="AAH13597.2"/>
    <property type="molecule type" value="mRNA"/>
</dbReference>
<dbReference type="EMBL" id="BT006962">
    <property type="protein sequence ID" value="AAP35608.1"/>
    <property type="molecule type" value="mRNA"/>
</dbReference>
<dbReference type="CCDS" id="CCDS2718.2"/>
<dbReference type="PIR" id="A38073">
    <property type="entry name" value="A38073"/>
</dbReference>
<dbReference type="RefSeq" id="NP_003411.3">
    <property type="nucleotide sequence ID" value="NM_003420.3"/>
</dbReference>
<dbReference type="RefSeq" id="XP_016862618.1">
    <property type="nucleotide sequence ID" value="XM_017007129.1"/>
</dbReference>
<dbReference type="RefSeq" id="XP_016862619.1">
    <property type="nucleotide sequence ID" value="XM_017007130.1"/>
</dbReference>
<dbReference type="RefSeq" id="XP_016862620.1">
    <property type="nucleotide sequence ID" value="XM_017007131.1"/>
</dbReference>
<dbReference type="RefSeq" id="XP_047304822.1">
    <property type="nucleotide sequence ID" value="XM_047448866.1"/>
</dbReference>
<dbReference type="RefSeq" id="XP_047304823.1">
    <property type="nucleotide sequence ID" value="XM_047448867.1"/>
</dbReference>
<dbReference type="RefSeq" id="XP_047304824.1">
    <property type="nucleotide sequence ID" value="XM_047448868.1"/>
</dbReference>
<dbReference type="RefSeq" id="XP_047304825.1">
    <property type="nucleotide sequence ID" value="XM_047448869.1"/>
</dbReference>
<dbReference type="RefSeq" id="XP_047304826.1">
    <property type="nucleotide sequence ID" value="XM_047448870.1"/>
</dbReference>
<dbReference type="RefSeq" id="XP_054187532.1">
    <property type="nucleotide sequence ID" value="XM_054331557.1"/>
</dbReference>
<dbReference type="RefSeq" id="XP_054187533.1">
    <property type="nucleotide sequence ID" value="XM_054331558.1"/>
</dbReference>
<dbReference type="RefSeq" id="XP_054187534.1">
    <property type="nucleotide sequence ID" value="XM_054331559.1"/>
</dbReference>
<dbReference type="RefSeq" id="XP_054187535.1">
    <property type="nucleotide sequence ID" value="XM_054331560.1"/>
</dbReference>
<dbReference type="RefSeq" id="XP_054187536.1">
    <property type="nucleotide sequence ID" value="XM_054331561.1"/>
</dbReference>
<dbReference type="RefSeq" id="XP_054203738.1">
    <property type="nucleotide sequence ID" value="XM_054347763.1"/>
</dbReference>
<dbReference type="RefSeq" id="XP_054203739.1">
    <property type="nucleotide sequence ID" value="XM_054347764.1"/>
</dbReference>
<dbReference type="RefSeq" id="XP_054203740.1">
    <property type="nucleotide sequence ID" value="XM_054347765.1"/>
</dbReference>
<dbReference type="RefSeq" id="XP_054203741.1">
    <property type="nucleotide sequence ID" value="XM_054347766.1"/>
</dbReference>
<dbReference type="RefSeq" id="XP_054203742.1">
    <property type="nucleotide sequence ID" value="XM_054347767.1"/>
</dbReference>
<dbReference type="SMR" id="P13682"/>
<dbReference type="BioGRID" id="113412">
    <property type="interactions" value="47"/>
</dbReference>
<dbReference type="FunCoup" id="P13682">
    <property type="interactions" value="509"/>
</dbReference>
<dbReference type="IntAct" id="P13682">
    <property type="interactions" value="39"/>
</dbReference>
<dbReference type="STRING" id="9606.ENSP00000379368"/>
<dbReference type="GlyGen" id="P13682">
    <property type="glycosylation" value="1 site, 1 O-linked glycan (1 site)"/>
</dbReference>
<dbReference type="iPTMnet" id="P13682"/>
<dbReference type="PhosphoSitePlus" id="P13682"/>
<dbReference type="BioMuta" id="ZNF35"/>
<dbReference type="DMDM" id="300669709"/>
<dbReference type="jPOST" id="P13682"/>
<dbReference type="MassIVE" id="P13682"/>
<dbReference type="PaxDb" id="9606-ENSP00000379368"/>
<dbReference type="PeptideAtlas" id="P13682"/>
<dbReference type="ProteomicsDB" id="52959"/>
<dbReference type="Pumba" id="P13682"/>
<dbReference type="Antibodypedia" id="12518">
    <property type="antibodies" value="237 antibodies from 22 providers"/>
</dbReference>
<dbReference type="DNASU" id="7584"/>
<dbReference type="Ensembl" id="ENST00000396056.7">
    <property type="protein sequence ID" value="ENSP00000379368.2"/>
    <property type="gene ID" value="ENSG00000169981.11"/>
</dbReference>
<dbReference type="Ensembl" id="ENST00000625394.3">
    <property type="protein sequence ID" value="ENSP00000486354.1"/>
    <property type="gene ID" value="ENSG00000281306.3"/>
</dbReference>
<dbReference type="GeneID" id="7584"/>
<dbReference type="KEGG" id="hsa:7584"/>
<dbReference type="MANE-Select" id="ENST00000396056.7">
    <property type="protein sequence ID" value="ENSP00000379368.2"/>
    <property type="RefSeq nucleotide sequence ID" value="NM_003420.4"/>
    <property type="RefSeq protein sequence ID" value="NP_003411.3"/>
</dbReference>
<dbReference type="UCSC" id="uc003cnq.4">
    <property type="organism name" value="human"/>
</dbReference>
<dbReference type="AGR" id="HGNC:13099"/>
<dbReference type="CTD" id="7584"/>
<dbReference type="DisGeNET" id="7584"/>
<dbReference type="GeneCards" id="ZNF35"/>
<dbReference type="HGNC" id="HGNC:13099">
    <property type="gene designation" value="ZNF35"/>
</dbReference>
<dbReference type="HPA" id="ENSG00000169981">
    <property type="expression patterns" value="Low tissue specificity"/>
</dbReference>
<dbReference type="MIM" id="194533">
    <property type="type" value="gene"/>
</dbReference>
<dbReference type="neXtProt" id="NX_P13682"/>
<dbReference type="OpenTargets" id="ENSG00000169981"/>
<dbReference type="PharmGKB" id="PA37674"/>
<dbReference type="VEuPathDB" id="HostDB:ENSG00000169981"/>
<dbReference type="eggNOG" id="KOG1721">
    <property type="taxonomic scope" value="Eukaryota"/>
</dbReference>
<dbReference type="GeneTree" id="ENSGT00940000162289"/>
<dbReference type="HOGENOM" id="CLU_002678_47_0_1"/>
<dbReference type="InParanoid" id="P13682"/>
<dbReference type="OMA" id="VNDCHLP"/>
<dbReference type="OrthoDB" id="4748970at2759"/>
<dbReference type="PAN-GO" id="P13682">
    <property type="GO annotations" value="3 GO annotations based on evolutionary models"/>
</dbReference>
<dbReference type="PhylomeDB" id="P13682"/>
<dbReference type="TreeFam" id="TF350849"/>
<dbReference type="PathwayCommons" id="P13682"/>
<dbReference type="SignaLink" id="P13682"/>
<dbReference type="BioGRID-ORCS" id="7584">
    <property type="hits" value="10 hits in 1177 CRISPR screens"/>
</dbReference>
<dbReference type="ChiTaRS" id="ZNF35">
    <property type="organism name" value="human"/>
</dbReference>
<dbReference type="GeneWiki" id="ZNF35"/>
<dbReference type="GenomeRNAi" id="7584"/>
<dbReference type="Pharos" id="P13682">
    <property type="development level" value="Tbio"/>
</dbReference>
<dbReference type="PRO" id="PR:P13682"/>
<dbReference type="Proteomes" id="UP000005640">
    <property type="component" value="Chromosome 3"/>
</dbReference>
<dbReference type="RNAct" id="P13682">
    <property type="molecule type" value="protein"/>
</dbReference>
<dbReference type="Bgee" id="ENSG00000169981">
    <property type="expression patterns" value="Expressed in male germ line stem cell (sensu Vertebrata) in testis and 104 other cell types or tissues"/>
</dbReference>
<dbReference type="ExpressionAtlas" id="P13682">
    <property type="expression patterns" value="baseline and differential"/>
</dbReference>
<dbReference type="GO" id="GO:0005634">
    <property type="term" value="C:nucleus"/>
    <property type="evidence" value="ECO:0000314"/>
    <property type="project" value="UniProtKB"/>
</dbReference>
<dbReference type="GO" id="GO:0048471">
    <property type="term" value="C:perinuclear region of cytoplasm"/>
    <property type="evidence" value="ECO:0000314"/>
    <property type="project" value="UniProtKB"/>
</dbReference>
<dbReference type="GO" id="GO:0003677">
    <property type="term" value="F:DNA binding"/>
    <property type="evidence" value="ECO:0000304"/>
    <property type="project" value="ProtInc"/>
</dbReference>
<dbReference type="GO" id="GO:0003700">
    <property type="term" value="F:DNA-binding transcription factor activity"/>
    <property type="evidence" value="ECO:0000314"/>
    <property type="project" value="UniProtKB"/>
</dbReference>
<dbReference type="GO" id="GO:0000981">
    <property type="term" value="F:DNA-binding transcription factor activity, RNA polymerase II-specific"/>
    <property type="evidence" value="ECO:0000318"/>
    <property type="project" value="GO_Central"/>
</dbReference>
<dbReference type="GO" id="GO:0000977">
    <property type="term" value="F:RNA polymerase II transcription regulatory region sequence-specific DNA binding"/>
    <property type="evidence" value="ECO:0000318"/>
    <property type="project" value="GO_Central"/>
</dbReference>
<dbReference type="GO" id="GO:0043565">
    <property type="term" value="F:sequence-specific DNA binding"/>
    <property type="evidence" value="ECO:0000314"/>
    <property type="project" value="UniProtKB"/>
</dbReference>
<dbReference type="GO" id="GO:0008270">
    <property type="term" value="F:zinc ion binding"/>
    <property type="evidence" value="ECO:0007669"/>
    <property type="project" value="UniProtKB-KW"/>
</dbReference>
<dbReference type="GO" id="GO:0071300">
    <property type="term" value="P:cellular response to retinoic acid"/>
    <property type="evidence" value="ECO:0000250"/>
    <property type="project" value="UniProtKB"/>
</dbReference>
<dbReference type="GO" id="GO:0006355">
    <property type="term" value="P:regulation of DNA-templated transcription"/>
    <property type="evidence" value="ECO:0000304"/>
    <property type="project" value="ProtInc"/>
</dbReference>
<dbReference type="GO" id="GO:0006357">
    <property type="term" value="P:regulation of transcription by RNA polymerase II"/>
    <property type="evidence" value="ECO:0000318"/>
    <property type="project" value="GO_Central"/>
</dbReference>
<dbReference type="GO" id="GO:0007283">
    <property type="term" value="P:spermatogenesis"/>
    <property type="evidence" value="ECO:0000250"/>
    <property type="project" value="UniProtKB"/>
</dbReference>
<dbReference type="FunFam" id="3.30.160.60:FF:000002">
    <property type="entry name" value="Zinc finger protein 1 homolog"/>
    <property type="match status" value="1"/>
</dbReference>
<dbReference type="FunFam" id="3.30.160.60:FF:000295">
    <property type="entry name" value="zinc finger protein 19"/>
    <property type="match status" value="1"/>
</dbReference>
<dbReference type="FunFam" id="3.30.160.60:FF:000003">
    <property type="entry name" value="Zinc finger protein 3 homolog"/>
    <property type="match status" value="1"/>
</dbReference>
<dbReference type="FunFam" id="3.30.160.60:FF:000165">
    <property type="entry name" value="Zinc finger protein 34"/>
    <property type="match status" value="1"/>
</dbReference>
<dbReference type="FunFam" id="3.30.160.60:FF:000848">
    <property type="entry name" value="Zinc finger protein 35"/>
    <property type="match status" value="3"/>
</dbReference>
<dbReference type="FunFam" id="3.30.160.60:FF:001288">
    <property type="entry name" value="Zinc finger protein 35"/>
    <property type="match status" value="1"/>
</dbReference>
<dbReference type="FunFam" id="3.30.160.60:FF:000016">
    <property type="entry name" value="zinc finger protein 37 homolog"/>
    <property type="match status" value="1"/>
</dbReference>
<dbReference type="FunFam" id="3.30.160.60:FF:002254">
    <property type="entry name" value="Zinc finger protein 540"/>
    <property type="match status" value="1"/>
</dbReference>
<dbReference type="FunFam" id="3.30.160.60:FF:000099">
    <property type="entry name" value="Zinc finger protein 79"/>
    <property type="match status" value="1"/>
</dbReference>
<dbReference type="Gene3D" id="3.30.160.60">
    <property type="entry name" value="Classic Zinc Finger"/>
    <property type="match status" value="11"/>
</dbReference>
<dbReference type="InterPro" id="IPR050758">
    <property type="entry name" value="Znf_C2H2-type"/>
</dbReference>
<dbReference type="InterPro" id="IPR036236">
    <property type="entry name" value="Znf_C2H2_sf"/>
</dbReference>
<dbReference type="InterPro" id="IPR013087">
    <property type="entry name" value="Znf_C2H2_type"/>
</dbReference>
<dbReference type="PANTHER" id="PTHR23234:SF8">
    <property type="entry name" value="C2H2-TYPE DOMAIN-CONTAINING PROTEIN"/>
    <property type="match status" value="1"/>
</dbReference>
<dbReference type="PANTHER" id="PTHR23234">
    <property type="entry name" value="ZNF44 PROTEIN"/>
    <property type="match status" value="1"/>
</dbReference>
<dbReference type="Pfam" id="PF00096">
    <property type="entry name" value="zf-C2H2"/>
    <property type="match status" value="11"/>
</dbReference>
<dbReference type="SMART" id="SM00355">
    <property type="entry name" value="ZnF_C2H2"/>
    <property type="match status" value="11"/>
</dbReference>
<dbReference type="SUPFAM" id="SSF57667">
    <property type="entry name" value="beta-beta-alpha zinc fingers"/>
    <property type="match status" value="6"/>
</dbReference>
<dbReference type="PROSITE" id="PS00028">
    <property type="entry name" value="ZINC_FINGER_C2H2_1"/>
    <property type="match status" value="11"/>
</dbReference>
<dbReference type="PROSITE" id="PS50157">
    <property type="entry name" value="ZINC_FINGER_C2H2_2"/>
    <property type="match status" value="11"/>
</dbReference>
<name>ZNF35_HUMAN</name>
<sequence>MTAELREAMALAPWGPVKVKKEEEEEENFPGQASSQQVHSENIKVWAPVQGLQTGLDGSEEEEKGQNISWDMAVVLKATQEAPAASTLGSYSLPGTLAKSEILETHGTMNFLGAETKNLQLLVPKTEICEEAEKPLIISERIQKADPQGPELGEACEKGNMLKRQRIKREKKDFRQVIVNDCHLPESFKEEENQKCKKSGGKYSLNSGAVKNPKTQLGQKPFTCSVCGKGFSQSANLVVHQRIHTGEKPFECHECGKAFIQSANLVVHQRIHTGQKPYVCSKCGKAFTQSSNLTVHQKIHSLEKTFKCNECEKAFSYSSQLARHQKVHITEKCYECNECGKTFTRSSNLIVHQRIHTGEKPFACNDCGKAFTQSANLIVHQRSHTGEKPYECKECGKAFSCFSHLIVHQRIHTAEKPYDCSECGKAFSQLSCLIVHQRIHSGDLPYVCNECGKAFTCSSYLLIHQRIHNGEKPYTCNECGKAFRQRSSLTVHQRTHTGEKPYECEKCGAAFISNSHLMRHHRTHLVE</sequence>
<protein>
    <recommendedName>
        <fullName>Zinc finger protein 35</fullName>
    </recommendedName>
    <alternativeName>
        <fullName>Zinc finger protein HF.10</fullName>
    </alternativeName>
</protein>
<organism>
    <name type="scientific">Homo sapiens</name>
    <name type="common">Human</name>
    <dbReference type="NCBI Taxonomy" id="9606"/>
    <lineage>
        <taxon>Eukaryota</taxon>
        <taxon>Metazoa</taxon>
        <taxon>Chordata</taxon>
        <taxon>Craniata</taxon>
        <taxon>Vertebrata</taxon>
        <taxon>Euteleostomi</taxon>
        <taxon>Mammalia</taxon>
        <taxon>Eutheria</taxon>
        <taxon>Euarchontoglires</taxon>
        <taxon>Primates</taxon>
        <taxon>Haplorrhini</taxon>
        <taxon>Catarrhini</taxon>
        <taxon>Hominidae</taxon>
        <taxon>Homo</taxon>
    </lineage>
</organism>
<comment type="function">
    <text>May be involved in transcriptional regulation. Involved in cell differentiation and/or proliferation.</text>
</comment>
<comment type="interaction">
    <interactant intactId="EBI-11041653">
        <id>P13682</id>
    </interactant>
    <interactant intactId="EBI-2514233">
        <id>Q9Y4X5</id>
        <label>ARIH1</label>
    </interactant>
    <organismsDiffer>false</organismsDiffer>
    <experiments>2</experiments>
</comment>
<comment type="interaction">
    <interactant intactId="EBI-11041653">
        <id>P13682</id>
    </interactant>
    <interactant intactId="EBI-1166928">
        <id>Q8N5M1</id>
        <label>ATPAF2</label>
    </interactant>
    <organismsDiffer>false</organismsDiffer>
    <experiments>3</experiments>
</comment>
<comment type="interaction">
    <interactant intactId="EBI-11041653">
        <id>P13682</id>
    </interactant>
    <interactant intactId="EBI-1181367">
        <id>Q01850</id>
        <label>CDR2</label>
    </interactant>
    <organismsDiffer>false</organismsDiffer>
    <experiments>3</experiments>
</comment>
<comment type="interaction">
    <interactant intactId="EBI-11041653">
        <id>P13682</id>
    </interactant>
    <interactant intactId="EBI-11063830">
        <id>Q86X02</id>
        <label>CDR2L</label>
    </interactant>
    <organismsDiffer>false</organismsDiffer>
    <experiments>3</experiments>
</comment>
<comment type="interaction">
    <interactant intactId="EBI-11041653">
        <id>P13682</id>
    </interactant>
    <interactant intactId="EBI-739624">
        <id>Q8NHQ1</id>
        <label>CEP70</label>
    </interactant>
    <organismsDiffer>false</organismsDiffer>
    <experiments>3</experiments>
</comment>
<comment type="interaction">
    <interactant intactId="EBI-11041653">
        <id>P13682</id>
    </interactant>
    <interactant intactId="EBI-5453285">
        <id>Q2TBE0</id>
        <label>CWF19L2</label>
    </interactant>
    <organismsDiffer>false</organismsDiffer>
    <experiments>3</experiments>
</comment>
<comment type="interaction">
    <interactant intactId="EBI-11041653">
        <id>P13682</id>
    </interactant>
    <interactant intactId="EBI-747840">
        <id>Q96G04</id>
        <label>EEF2KMT</label>
    </interactant>
    <organismsDiffer>false</organismsDiffer>
    <experiments>3</experiments>
</comment>
<comment type="interaction">
    <interactant intactId="EBI-11041653">
        <id>P13682</id>
    </interactant>
    <interactant intactId="EBI-742102">
        <id>Q8IYI6</id>
        <label>EXOC8</label>
    </interactant>
    <organismsDiffer>false</organismsDiffer>
    <experiments>3</experiments>
</comment>
<comment type="interaction">
    <interactant intactId="EBI-11041653">
        <id>P13682</id>
    </interactant>
    <interactant intactId="EBI-5661036">
        <id>A1L4K1</id>
        <label>FSD2</label>
    </interactant>
    <organismsDiffer>false</organismsDiffer>
    <experiments>3</experiments>
</comment>
<comment type="interaction">
    <interactant intactId="EBI-11041653">
        <id>P13682</id>
    </interactant>
    <interactant intactId="EBI-356700">
        <id>P57678</id>
        <label>GEMIN4</label>
    </interactant>
    <organismsDiffer>false</organismsDiffer>
    <experiments>3</experiments>
</comment>
<comment type="interaction">
    <interactant intactId="EBI-11041653">
        <id>P13682</id>
    </interactant>
    <interactant intactId="EBI-618309">
        <id>Q08379</id>
        <label>GOLGA2</label>
    </interactant>
    <organismsDiffer>false</organismsDiffer>
    <experiments>3</experiments>
</comment>
<comment type="interaction">
    <interactant intactId="EBI-11041653">
        <id>P13682</id>
    </interactant>
    <interactant intactId="EBI-5916454">
        <id>A6NEM1</id>
        <label>GOLGA6L9</label>
    </interactant>
    <organismsDiffer>false</organismsDiffer>
    <experiments>3</experiments>
</comment>
<comment type="interaction">
    <interactant intactId="EBI-11041653">
        <id>P13682</id>
    </interactant>
    <interactant intactId="EBI-717919">
        <id>Q4V328</id>
        <label>GRIPAP1</label>
    </interactant>
    <organismsDiffer>false</organismsDiffer>
    <experiments>3</experiments>
</comment>
<comment type="interaction">
    <interactant intactId="EBI-11041653">
        <id>P13682</id>
    </interactant>
    <interactant intactId="EBI-748420">
        <id>Q9NSC5</id>
        <label>HOMER3</label>
    </interactant>
    <organismsDiffer>false</organismsDiffer>
    <experiments>3</experiments>
</comment>
<comment type="interaction">
    <interactant intactId="EBI-11041653">
        <id>P13682</id>
    </interactant>
    <interactant intactId="EBI-746704">
        <id>Q9UJC3</id>
        <label>HOOK1</label>
    </interactant>
    <organismsDiffer>false</organismsDiffer>
    <experiments>3</experiments>
</comment>
<comment type="interaction">
    <interactant intactId="EBI-11041653">
        <id>P13682</id>
    </interactant>
    <interactant intactId="EBI-10961706">
        <id>Q96ED9-2</id>
        <label>HOOK2</label>
    </interactant>
    <organismsDiffer>false</organismsDiffer>
    <experiments>3</experiments>
</comment>
<comment type="interaction">
    <interactant intactId="EBI-11041653">
        <id>P13682</id>
    </interactant>
    <interactant intactId="EBI-1216080">
        <id>Q9Y250</id>
        <label>LZTS1</label>
    </interactant>
    <organismsDiffer>false</organismsDiffer>
    <experiments>3</experiments>
</comment>
<comment type="interaction">
    <interactant intactId="EBI-11041653">
        <id>P13682</id>
    </interactant>
    <interactant intactId="EBI-10255081">
        <id>Q9NYL2-2</id>
        <label>MAP3K20</label>
    </interactant>
    <organismsDiffer>false</organismsDiffer>
    <experiments>3</experiments>
</comment>
<comment type="interaction">
    <interactant intactId="EBI-11041653">
        <id>P13682</id>
    </interactant>
    <interactant intactId="EBI-307531">
        <id>P23508</id>
        <label>MCC</label>
    </interactant>
    <organismsDiffer>false</organismsDiffer>
    <experiments>3</experiments>
</comment>
<comment type="interaction">
    <interactant intactId="EBI-11041653">
        <id>P13682</id>
    </interactant>
    <interactant intactId="EBI-11522433">
        <id>Q5JR59-3</id>
        <label>MTUS2</label>
    </interactant>
    <organismsDiffer>false</organismsDiffer>
    <experiments>3</experiments>
</comment>
<comment type="interaction">
    <interactant intactId="EBI-11041653">
        <id>P13682</id>
    </interactant>
    <interactant intactId="EBI-447677">
        <id>Q99836</id>
        <label>MYD88</label>
    </interactant>
    <organismsDiffer>false</organismsDiffer>
    <experiments>3</experiments>
</comment>
<comment type="interaction">
    <interactant intactId="EBI-11041653">
        <id>P13682</id>
    </interactant>
    <interactant intactId="EBI-928842">
        <id>Q9GZM8</id>
        <label>NDEL1</label>
    </interactant>
    <organismsDiffer>false</organismsDiffer>
    <experiments>3</experiments>
</comment>
<comment type="interaction">
    <interactant intactId="EBI-11041653">
        <id>P13682</id>
    </interactant>
    <interactant intactId="EBI-14066006">
        <id>Q4G0R1</id>
        <label>PIBF1</label>
    </interactant>
    <organismsDiffer>false</organismsDiffer>
    <experiments>3</experiments>
</comment>
<comment type="interaction">
    <interactant intactId="EBI-11041653">
        <id>P13682</id>
    </interactant>
    <interactant intactId="EBI-79165">
        <id>Q9NRD5</id>
        <label>PICK1</label>
    </interactant>
    <organismsDiffer>false</organismsDiffer>
    <experiments>3</experiments>
</comment>
<comment type="interaction">
    <interactant intactId="EBI-11041653">
        <id>P13682</id>
    </interactant>
    <interactant intactId="EBI-302345">
        <id>Q8ND90</id>
        <label>PNMA1</label>
    </interactant>
    <organismsDiffer>false</organismsDiffer>
    <experiments>3</experiments>
</comment>
<comment type="interaction">
    <interactant intactId="EBI-11041653">
        <id>P13682</id>
    </interactant>
    <interactant intactId="EBI-2805516">
        <id>P31321</id>
        <label>PRKAR1B</label>
    </interactant>
    <organismsDiffer>false</organismsDiffer>
    <experiments>3</experiments>
</comment>
<comment type="interaction">
    <interactant intactId="EBI-11041653">
        <id>P13682</id>
    </interactant>
    <interactant intactId="EBI-355744">
        <id>Q12933</id>
        <label>TRAF2</label>
    </interactant>
    <organismsDiffer>false</organismsDiffer>
    <experiments>3</experiments>
</comment>
<comment type="interaction">
    <interactant intactId="EBI-11041653">
        <id>P13682</id>
    </interactant>
    <interactant intactId="EBI-716093">
        <id>P13994</id>
        <label>YJU2B</label>
    </interactant>
    <organismsDiffer>false</organismsDiffer>
    <experiments>3</experiments>
</comment>
<comment type="interaction">
    <interactant intactId="EBI-11041653">
        <id>P13682</id>
    </interactant>
    <interactant intactId="EBI-742740">
        <id>Q96BR9</id>
        <label>ZBTB8A</label>
    </interactant>
    <organismsDiffer>false</organismsDiffer>
    <experiments>3</experiments>
</comment>
<comment type="interaction">
    <interactant intactId="EBI-11041653">
        <id>P13682</id>
    </interactant>
    <interactant intactId="EBI-10183064">
        <id>Q8N5A5-2</id>
        <label>ZGPAT</label>
    </interactant>
    <organismsDiffer>false</organismsDiffer>
    <experiments>3</experiments>
</comment>
<comment type="subcellular location">
    <subcellularLocation>
        <location evidence="3">Nucleus</location>
    </subcellularLocation>
</comment>
<comment type="similarity">
    <text evidence="3">Belongs to the krueppel C2H2-type zinc-finger protein family.</text>
</comment>
<comment type="sequence caution" evidence="3">
    <conflict type="erroneous initiation">
        <sequence resource="EMBL-CDS" id="AAA85451"/>
    </conflict>
    <text>Truncated N-terminus.</text>
</comment>
<comment type="sequence caution" evidence="3">
    <conflict type="erroneous initiation">
        <sequence resource="EMBL-CDS" id="BAG37343"/>
    </conflict>
    <text>Truncated N-terminus.</text>
</comment>
<comment type="sequence caution" evidence="3">
    <conflict type="erroneous initiation">
        <sequence resource="EMBL-CDS" id="CAA30268"/>
    </conflict>
    <text>Truncated N-terminus.</text>
</comment>
<reference key="1">
    <citation type="journal article" date="1988" name="Nucleic Acids Res.">
        <title>Isolation of cDNAs encoding finger proteins and measurement of the corresponding mRNA levels during myeloid terminal differentiation.</title>
        <authorList>
            <person name="Pannuti A."/>
            <person name="Lanfrancone L."/>
            <person name="Pascucci A."/>
            <person name="Pelicci P.-G."/>
            <person name="la Mantia G."/>
            <person name="Lania L."/>
        </authorList>
    </citation>
    <scope>NUCLEOTIDE SEQUENCE [MRNA]</scope>
    <source>
        <tissue>Placenta</tissue>
    </source>
</reference>
<reference key="2">
    <citation type="journal article" date="1992" name="Genomics">
        <title>Structural and functional organization of the HF.10 human zinc finger gene (ZNF35) located on chromosome 3p21-p22.</title>
        <authorList>
            <person name="Lanfrancone L."/>
            <person name="Pengue G."/>
            <person name="Pandolfi P.P."/>
            <person name="Salcini A.E."/>
            <person name="Giacomucci A."/>
            <person name="Longo L."/>
            <person name="Donti E."/>
            <person name="de Luca P."/>
            <person name="la Mantia G."/>
            <person name="Pelicci P.-G."/>
            <person name="Lania L."/>
        </authorList>
    </citation>
    <scope>NUCLEOTIDE SEQUENCE [GENOMIC DNA]</scope>
</reference>
<reference key="3">
    <citation type="journal article" date="2004" name="Nat. Genet.">
        <title>Complete sequencing and characterization of 21,243 full-length human cDNAs.</title>
        <authorList>
            <person name="Ota T."/>
            <person name="Suzuki Y."/>
            <person name="Nishikawa T."/>
            <person name="Otsuki T."/>
            <person name="Sugiyama T."/>
            <person name="Irie R."/>
            <person name="Wakamatsu A."/>
            <person name="Hayashi K."/>
            <person name="Sato H."/>
            <person name="Nagai K."/>
            <person name="Kimura K."/>
            <person name="Makita H."/>
            <person name="Sekine M."/>
            <person name="Obayashi M."/>
            <person name="Nishi T."/>
            <person name="Shibahara T."/>
            <person name="Tanaka T."/>
            <person name="Ishii S."/>
            <person name="Yamamoto J."/>
            <person name="Saito K."/>
            <person name="Kawai Y."/>
            <person name="Isono Y."/>
            <person name="Nakamura Y."/>
            <person name="Nagahari K."/>
            <person name="Murakami K."/>
            <person name="Yasuda T."/>
            <person name="Iwayanagi T."/>
            <person name="Wagatsuma M."/>
            <person name="Shiratori A."/>
            <person name="Sudo H."/>
            <person name="Hosoiri T."/>
            <person name="Kaku Y."/>
            <person name="Kodaira H."/>
            <person name="Kondo H."/>
            <person name="Sugawara M."/>
            <person name="Takahashi M."/>
            <person name="Kanda K."/>
            <person name="Yokoi T."/>
            <person name="Furuya T."/>
            <person name="Kikkawa E."/>
            <person name="Omura Y."/>
            <person name="Abe K."/>
            <person name="Kamihara K."/>
            <person name="Katsuta N."/>
            <person name="Sato K."/>
            <person name="Tanikawa M."/>
            <person name="Yamazaki M."/>
            <person name="Ninomiya K."/>
            <person name="Ishibashi T."/>
            <person name="Yamashita H."/>
            <person name="Murakawa K."/>
            <person name="Fujimori K."/>
            <person name="Tanai H."/>
            <person name="Kimata M."/>
            <person name="Watanabe M."/>
            <person name="Hiraoka S."/>
            <person name="Chiba Y."/>
            <person name="Ishida S."/>
            <person name="Ono Y."/>
            <person name="Takiguchi S."/>
            <person name="Watanabe S."/>
            <person name="Yosida M."/>
            <person name="Hotuta T."/>
            <person name="Kusano J."/>
            <person name="Kanehori K."/>
            <person name="Takahashi-Fujii A."/>
            <person name="Hara H."/>
            <person name="Tanase T.-O."/>
            <person name="Nomura Y."/>
            <person name="Togiya S."/>
            <person name="Komai F."/>
            <person name="Hara R."/>
            <person name="Takeuchi K."/>
            <person name="Arita M."/>
            <person name="Imose N."/>
            <person name="Musashino K."/>
            <person name="Yuuki H."/>
            <person name="Oshima A."/>
            <person name="Sasaki N."/>
            <person name="Aotsuka S."/>
            <person name="Yoshikawa Y."/>
            <person name="Matsunawa H."/>
            <person name="Ichihara T."/>
            <person name="Shiohata N."/>
            <person name="Sano S."/>
            <person name="Moriya S."/>
            <person name="Momiyama H."/>
            <person name="Satoh N."/>
            <person name="Takami S."/>
            <person name="Terashima Y."/>
            <person name="Suzuki O."/>
            <person name="Nakagawa S."/>
            <person name="Senoh A."/>
            <person name="Mizoguchi H."/>
            <person name="Goto Y."/>
            <person name="Shimizu F."/>
            <person name="Wakebe H."/>
            <person name="Hishigaki H."/>
            <person name="Watanabe T."/>
            <person name="Sugiyama A."/>
            <person name="Takemoto M."/>
            <person name="Kawakami B."/>
            <person name="Yamazaki M."/>
            <person name="Watanabe K."/>
            <person name="Kumagai A."/>
            <person name="Itakura S."/>
            <person name="Fukuzumi Y."/>
            <person name="Fujimori Y."/>
            <person name="Komiyama M."/>
            <person name="Tashiro H."/>
            <person name="Tanigami A."/>
            <person name="Fujiwara T."/>
            <person name="Ono T."/>
            <person name="Yamada K."/>
            <person name="Fujii Y."/>
            <person name="Ozaki K."/>
            <person name="Hirao M."/>
            <person name="Ohmori Y."/>
            <person name="Kawabata A."/>
            <person name="Hikiji T."/>
            <person name="Kobatake N."/>
            <person name="Inagaki H."/>
            <person name="Ikema Y."/>
            <person name="Okamoto S."/>
            <person name="Okitani R."/>
            <person name="Kawakami T."/>
            <person name="Noguchi S."/>
            <person name="Itoh T."/>
            <person name="Shigeta K."/>
            <person name="Senba T."/>
            <person name="Matsumura K."/>
            <person name="Nakajima Y."/>
            <person name="Mizuno T."/>
            <person name="Morinaga M."/>
            <person name="Sasaki M."/>
            <person name="Togashi T."/>
            <person name="Oyama M."/>
            <person name="Hata H."/>
            <person name="Watanabe M."/>
            <person name="Komatsu T."/>
            <person name="Mizushima-Sugano J."/>
            <person name="Satoh T."/>
            <person name="Shirai Y."/>
            <person name="Takahashi Y."/>
            <person name="Nakagawa K."/>
            <person name="Okumura K."/>
            <person name="Nagase T."/>
            <person name="Nomura N."/>
            <person name="Kikuchi H."/>
            <person name="Masuho Y."/>
            <person name="Yamashita R."/>
            <person name="Nakai K."/>
            <person name="Yada T."/>
            <person name="Nakamura Y."/>
            <person name="Ohara O."/>
            <person name="Isogai T."/>
            <person name="Sugano S."/>
        </authorList>
    </citation>
    <scope>NUCLEOTIDE SEQUENCE [LARGE SCALE MRNA]</scope>
</reference>
<reference key="4">
    <citation type="journal article" date="2006" name="Nature">
        <title>The DNA sequence, annotation and analysis of human chromosome 3.</title>
        <authorList>
            <person name="Muzny D.M."/>
            <person name="Scherer S.E."/>
            <person name="Kaul R."/>
            <person name="Wang J."/>
            <person name="Yu J."/>
            <person name="Sudbrak R."/>
            <person name="Buhay C.J."/>
            <person name="Chen R."/>
            <person name="Cree A."/>
            <person name="Ding Y."/>
            <person name="Dugan-Rocha S."/>
            <person name="Gill R."/>
            <person name="Gunaratne P."/>
            <person name="Harris R.A."/>
            <person name="Hawes A.C."/>
            <person name="Hernandez J."/>
            <person name="Hodgson A.V."/>
            <person name="Hume J."/>
            <person name="Jackson A."/>
            <person name="Khan Z.M."/>
            <person name="Kovar-Smith C."/>
            <person name="Lewis L.R."/>
            <person name="Lozado R.J."/>
            <person name="Metzker M.L."/>
            <person name="Milosavljevic A."/>
            <person name="Miner G.R."/>
            <person name="Morgan M.B."/>
            <person name="Nazareth L.V."/>
            <person name="Scott G."/>
            <person name="Sodergren E."/>
            <person name="Song X.-Z."/>
            <person name="Steffen D."/>
            <person name="Wei S."/>
            <person name="Wheeler D.A."/>
            <person name="Wright M.W."/>
            <person name="Worley K.C."/>
            <person name="Yuan Y."/>
            <person name="Zhang Z."/>
            <person name="Adams C.Q."/>
            <person name="Ansari-Lari M.A."/>
            <person name="Ayele M."/>
            <person name="Brown M.J."/>
            <person name="Chen G."/>
            <person name="Chen Z."/>
            <person name="Clendenning J."/>
            <person name="Clerc-Blankenburg K.P."/>
            <person name="Chen R."/>
            <person name="Chen Z."/>
            <person name="Davis C."/>
            <person name="Delgado O."/>
            <person name="Dinh H.H."/>
            <person name="Dong W."/>
            <person name="Draper H."/>
            <person name="Ernst S."/>
            <person name="Fu G."/>
            <person name="Gonzalez-Garay M.L."/>
            <person name="Garcia D.K."/>
            <person name="Gillett W."/>
            <person name="Gu J."/>
            <person name="Hao B."/>
            <person name="Haugen E."/>
            <person name="Havlak P."/>
            <person name="He X."/>
            <person name="Hennig S."/>
            <person name="Hu S."/>
            <person name="Huang W."/>
            <person name="Jackson L.R."/>
            <person name="Jacob L.S."/>
            <person name="Kelly S.H."/>
            <person name="Kube M."/>
            <person name="Levy R."/>
            <person name="Li Z."/>
            <person name="Liu B."/>
            <person name="Liu J."/>
            <person name="Liu W."/>
            <person name="Lu J."/>
            <person name="Maheshwari M."/>
            <person name="Nguyen B.-V."/>
            <person name="Okwuonu G.O."/>
            <person name="Palmeiri A."/>
            <person name="Pasternak S."/>
            <person name="Perez L.M."/>
            <person name="Phelps K.A."/>
            <person name="Plopper F.J."/>
            <person name="Qiang B."/>
            <person name="Raymond C."/>
            <person name="Rodriguez R."/>
            <person name="Saenphimmachak C."/>
            <person name="Santibanez J."/>
            <person name="Shen H."/>
            <person name="Shen Y."/>
            <person name="Subramanian S."/>
            <person name="Tabor P.E."/>
            <person name="Verduzco D."/>
            <person name="Waldron L."/>
            <person name="Wang J."/>
            <person name="Wang J."/>
            <person name="Wang Q."/>
            <person name="Williams G.A."/>
            <person name="Wong G.K.-S."/>
            <person name="Yao Z."/>
            <person name="Zhang J."/>
            <person name="Zhang X."/>
            <person name="Zhao G."/>
            <person name="Zhou J."/>
            <person name="Zhou Y."/>
            <person name="Nelson D."/>
            <person name="Lehrach H."/>
            <person name="Reinhardt R."/>
            <person name="Naylor S.L."/>
            <person name="Yang H."/>
            <person name="Olson M."/>
            <person name="Weinstock G."/>
            <person name="Gibbs R.A."/>
        </authorList>
    </citation>
    <scope>NUCLEOTIDE SEQUENCE [LARGE SCALE GENOMIC DNA]</scope>
</reference>
<reference key="5">
    <citation type="journal article" date="2004" name="Genome Res.">
        <title>The status, quality, and expansion of the NIH full-length cDNA project: the Mammalian Gene Collection (MGC).</title>
        <authorList>
            <consortium name="The MGC Project Team"/>
        </authorList>
    </citation>
    <scope>NUCLEOTIDE SEQUENCE [LARGE SCALE MRNA]</scope>
    <source>
        <tissue>Brain</tissue>
    </source>
</reference>
<reference key="6">
    <citation type="submission" date="2003-05" db="EMBL/GenBank/DDBJ databases">
        <title>Cloning of human full-length CDSs in BD Creator(TM) system donor vector.</title>
        <authorList>
            <person name="Kalnine N."/>
            <person name="Chen X."/>
            <person name="Rolfs A."/>
            <person name="Halleck A."/>
            <person name="Hines L."/>
            <person name="Eisenstein S."/>
            <person name="Koundinya M."/>
            <person name="Raphael J."/>
            <person name="Moreira D."/>
            <person name="Kelley T."/>
            <person name="LaBaer J."/>
            <person name="Lin Y."/>
            <person name="Phelan M."/>
            <person name="Farmer A."/>
        </authorList>
    </citation>
    <scope>NUCLEOTIDE SEQUENCE [LARGE SCALE MRNA] OF 9-527</scope>
</reference>
<reference key="7">
    <citation type="journal article" date="2017" name="Nat. Struct. Mol. Biol.">
        <title>Site-specific mapping of the human SUMO proteome reveals co-modification with phosphorylation.</title>
        <authorList>
            <person name="Hendriks I.A."/>
            <person name="Lyon D."/>
            <person name="Young C."/>
            <person name="Jensen L.J."/>
            <person name="Vertegaal A.C."/>
            <person name="Nielsen M.L."/>
        </authorList>
    </citation>
    <scope>SUMOYLATION [LARGE SCALE ANALYSIS] AT LYS-20; LYS-21; LYS-99; LYS-117; LYS-125; LYS-144; LYS-158; LYS-189; LYS-214 AND LYS-276</scope>
    <scope>IDENTIFICATION BY MASS SPECTROMETRY [LARGE SCALE ANALYSIS]</scope>
</reference>
<gene>
    <name type="primary">ZNF35</name>
</gene>
<evidence type="ECO:0000255" key="1">
    <source>
        <dbReference type="PROSITE-ProRule" id="PRU00042"/>
    </source>
</evidence>
<evidence type="ECO:0000256" key="2">
    <source>
        <dbReference type="SAM" id="MobiDB-lite"/>
    </source>
</evidence>
<evidence type="ECO:0000305" key="3"/>
<evidence type="ECO:0007744" key="4">
    <source>
    </source>
</evidence>
<accession>P13682</accession>
<accession>B2RBU6</accession>
<accession>Q53Y54</accession>
<accession>Q96D01</accession>